<proteinExistence type="inferred from homology"/>
<reference key="1">
    <citation type="journal article" date="1997" name="J. Bacteriol.">
        <title>Complete genome sequence of Methanobacterium thermoautotrophicum deltaH: functional analysis and comparative genomics.</title>
        <authorList>
            <person name="Smith D.R."/>
            <person name="Doucette-Stamm L.A."/>
            <person name="Deloughery C."/>
            <person name="Lee H.-M."/>
            <person name="Dubois J."/>
            <person name="Aldredge T."/>
            <person name="Bashirzadeh R."/>
            <person name="Blakely D."/>
            <person name="Cook R."/>
            <person name="Gilbert K."/>
            <person name="Harrison D."/>
            <person name="Hoang L."/>
            <person name="Keagle P."/>
            <person name="Lumm W."/>
            <person name="Pothier B."/>
            <person name="Qiu D."/>
            <person name="Spadafora R."/>
            <person name="Vicare R."/>
            <person name="Wang Y."/>
            <person name="Wierzbowski J."/>
            <person name="Gibson R."/>
            <person name="Jiwani N."/>
            <person name="Caruso A."/>
            <person name="Bush D."/>
            <person name="Safer H."/>
            <person name="Patwell D."/>
            <person name="Prabhakar S."/>
            <person name="McDougall S."/>
            <person name="Shimer G."/>
            <person name="Goyal A."/>
            <person name="Pietrovski S."/>
            <person name="Church G.M."/>
            <person name="Daniels C.J."/>
            <person name="Mao J.-I."/>
            <person name="Rice P."/>
            <person name="Noelling J."/>
            <person name="Reeve J.N."/>
        </authorList>
    </citation>
    <scope>NUCLEOTIDE SEQUENCE [LARGE SCALE GENOMIC DNA]</scope>
    <source>
        <strain>ATCC 29096 / DSM 1053 / JCM 10044 / NBRC 100330 / Delta H</strain>
    </source>
</reference>
<accession>O27186</accession>
<protein>
    <recommendedName>
        <fullName evidence="1">Uracil phosphoribosyltransferase</fullName>
        <ecNumber evidence="1">2.4.2.9</ecNumber>
    </recommendedName>
    <alternativeName>
        <fullName evidence="1">UMP pyrophosphorylase</fullName>
    </alternativeName>
    <alternativeName>
        <fullName evidence="1">UPRTase</fullName>
    </alternativeName>
</protein>
<sequence length="215" mass="23827">MDGERMMLRVIDNLIVREKLTTIRCRGIDPASFRRGVTDIGRYMAYEFADTLKWREVEVETPLGTASGVEITDRDRIVLLSILRASLPFTEGVMKVFPEAEHGIIGARRSDEPPFRVSIDYIRVPELDDKILVIADPMLATGNTMIGILEALEAHGSPARTVVFNIISSRMGLDRVLQRGIDVYTCGVEEEVNDMGYIVPGLGDAGDLAFGRPSD</sequence>
<organism>
    <name type="scientific">Methanothermobacter thermautotrophicus (strain ATCC 29096 / DSM 1053 / JCM 10044 / NBRC 100330 / Delta H)</name>
    <name type="common">Methanobacterium thermoautotrophicum</name>
    <dbReference type="NCBI Taxonomy" id="187420"/>
    <lineage>
        <taxon>Archaea</taxon>
        <taxon>Methanobacteriati</taxon>
        <taxon>Methanobacteriota</taxon>
        <taxon>Methanomada group</taxon>
        <taxon>Methanobacteria</taxon>
        <taxon>Methanobacteriales</taxon>
        <taxon>Methanobacteriaceae</taxon>
        <taxon>Methanothermobacter</taxon>
    </lineage>
</organism>
<dbReference type="EC" id="2.4.2.9" evidence="1"/>
<dbReference type="EMBL" id="AE000666">
    <property type="protein sequence ID" value="AAB85603.1"/>
    <property type="molecule type" value="Genomic_DNA"/>
</dbReference>
<dbReference type="PIR" id="C69015">
    <property type="entry name" value="C69015"/>
</dbReference>
<dbReference type="SMR" id="O27186"/>
<dbReference type="STRING" id="187420.MTH_1114"/>
<dbReference type="PaxDb" id="187420-MTH_1114"/>
<dbReference type="EnsemblBacteria" id="AAB85603">
    <property type="protein sequence ID" value="AAB85603"/>
    <property type="gene ID" value="MTH_1114"/>
</dbReference>
<dbReference type="KEGG" id="mth:MTH_1114"/>
<dbReference type="PATRIC" id="fig|187420.15.peg.1090"/>
<dbReference type="HOGENOM" id="CLU_067096_2_0_2"/>
<dbReference type="InParanoid" id="O27186"/>
<dbReference type="UniPathway" id="UPA00574">
    <property type="reaction ID" value="UER00636"/>
</dbReference>
<dbReference type="Proteomes" id="UP000005223">
    <property type="component" value="Chromosome"/>
</dbReference>
<dbReference type="GO" id="GO:0005525">
    <property type="term" value="F:GTP binding"/>
    <property type="evidence" value="ECO:0007669"/>
    <property type="project" value="UniProtKB-KW"/>
</dbReference>
<dbReference type="GO" id="GO:0000287">
    <property type="term" value="F:magnesium ion binding"/>
    <property type="evidence" value="ECO:0007669"/>
    <property type="project" value="UniProtKB-UniRule"/>
</dbReference>
<dbReference type="GO" id="GO:0004845">
    <property type="term" value="F:uracil phosphoribosyltransferase activity"/>
    <property type="evidence" value="ECO:0007669"/>
    <property type="project" value="UniProtKB-UniRule"/>
</dbReference>
<dbReference type="GO" id="GO:0044206">
    <property type="term" value="P:UMP salvage"/>
    <property type="evidence" value="ECO:0007669"/>
    <property type="project" value="UniProtKB-UniRule"/>
</dbReference>
<dbReference type="GO" id="GO:0006223">
    <property type="term" value="P:uracil salvage"/>
    <property type="evidence" value="ECO:0007669"/>
    <property type="project" value="InterPro"/>
</dbReference>
<dbReference type="CDD" id="cd06223">
    <property type="entry name" value="PRTases_typeI"/>
    <property type="match status" value="1"/>
</dbReference>
<dbReference type="Gene3D" id="3.40.50.2020">
    <property type="match status" value="1"/>
</dbReference>
<dbReference type="HAMAP" id="MF_01218_A">
    <property type="entry name" value="Upp_A"/>
    <property type="match status" value="1"/>
</dbReference>
<dbReference type="InterPro" id="IPR000836">
    <property type="entry name" value="PRibTrfase_dom"/>
</dbReference>
<dbReference type="InterPro" id="IPR029057">
    <property type="entry name" value="PRTase-like"/>
</dbReference>
<dbReference type="InterPro" id="IPR034331">
    <property type="entry name" value="Upp_A"/>
</dbReference>
<dbReference type="InterPro" id="IPR005765">
    <property type="entry name" value="Ura_phspho_trans"/>
</dbReference>
<dbReference type="NCBIfam" id="NF001097">
    <property type="entry name" value="PRK00129.1"/>
    <property type="match status" value="1"/>
</dbReference>
<dbReference type="NCBIfam" id="TIGR01091">
    <property type="entry name" value="upp"/>
    <property type="match status" value="1"/>
</dbReference>
<dbReference type="Pfam" id="PF14681">
    <property type="entry name" value="UPRTase"/>
    <property type="match status" value="1"/>
</dbReference>
<dbReference type="SUPFAM" id="SSF53271">
    <property type="entry name" value="PRTase-like"/>
    <property type="match status" value="1"/>
</dbReference>
<feature type="chain" id="PRO_0000120921" description="Uracil phosphoribosyltransferase">
    <location>
        <begin position="1"/>
        <end position="215"/>
    </location>
</feature>
<feature type="binding site" evidence="1">
    <location>
        <position position="84"/>
    </location>
    <ligand>
        <name>5-phospho-alpha-D-ribose 1-diphosphate</name>
        <dbReference type="ChEBI" id="CHEBI:58017"/>
    </ligand>
</feature>
<feature type="binding site" evidence="1">
    <location>
        <position position="109"/>
    </location>
    <ligand>
        <name>5-phospho-alpha-D-ribose 1-diphosphate</name>
        <dbReference type="ChEBI" id="CHEBI:58017"/>
    </ligand>
</feature>
<feature type="binding site" evidence="1">
    <location>
        <begin position="136"/>
        <end position="144"/>
    </location>
    <ligand>
        <name>5-phospho-alpha-D-ribose 1-diphosphate</name>
        <dbReference type="ChEBI" id="CHEBI:58017"/>
    </ligand>
</feature>
<feature type="binding site" evidence="1">
    <location>
        <position position="198"/>
    </location>
    <ligand>
        <name>uracil</name>
        <dbReference type="ChEBI" id="CHEBI:17568"/>
    </ligand>
</feature>
<feature type="binding site" evidence="1">
    <location>
        <begin position="203"/>
        <end position="205"/>
    </location>
    <ligand>
        <name>uracil</name>
        <dbReference type="ChEBI" id="CHEBI:17568"/>
    </ligand>
</feature>
<feature type="binding site" evidence="1">
    <location>
        <position position="204"/>
    </location>
    <ligand>
        <name>5-phospho-alpha-D-ribose 1-diphosphate</name>
        <dbReference type="ChEBI" id="CHEBI:58017"/>
    </ligand>
</feature>
<keyword id="KW-0021">Allosteric enzyme</keyword>
<keyword id="KW-0328">Glycosyltransferase</keyword>
<keyword id="KW-0342">GTP-binding</keyword>
<keyword id="KW-0460">Magnesium</keyword>
<keyword id="KW-0547">Nucleotide-binding</keyword>
<keyword id="KW-1185">Reference proteome</keyword>
<keyword id="KW-0808">Transferase</keyword>
<name>UPP_METTH</name>
<gene>
    <name evidence="1" type="primary">upp</name>
    <name type="ordered locus">MTH_1114</name>
</gene>
<comment type="function">
    <text evidence="1">Catalyzes the conversion of uracil and 5-phospho-alpha-D-ribose 1-diphosphate (PRPP) to UMP and diphosphate.</text>
</comment>
<comment type="catalytic activity">
    <reaction evidence="1">
        <text>UMP + diphosphate = 5-phospho-alpha-D-ribose 1-diphosphate + uracil</text>
        <dbReference type="Rhea" id="RHEA:13017"/>
        <dbReference type="ChEBI" id="CHEBI:17568"/>
        <dbReference type="ChEBI" id="CHEBI:33019"/>
        <dbReference type="ChEBI" id="CHEBI:57865"/>
        <dbReference type="ChEBI" id="CHEBI:58017"/>
        <dbReference type="EC" id="2.4.2.9"/>
    </reaction>
</comment>
<comment type="cofactor">
    <cofactor evidence="1">
        <name>Mg(2+)</name>
        <dbReference type="ChEBI" id="CHEBI:18420"/>
    </cofactor>
    <text evidence="1">Binds 1 Mg(2+) ion per subunit. The magnesium is bound as Mg-PRPP.</text>
</comment>
<comment type="activity regulation">
    <text evidence="1">Allosterically activated by GTP.</text>
</comment>
<comment type="pathway">
    <text evidence="1">Pyrimidine metabolism; UMP biosynthesis via salvage pathway; UMP from uracil: step 1/1.</text>
</comment>
<comment type="similarity">
    <text evidence="1">Belongs to the UPRTase family.</text>
</comment>
<evidence type="ECO:0000255" key="1">
    <source>
        <dbReference type="HAMAP-Rule" id="MF_01218"/>
    </source>
</evidence>